<feature type="chain" id="PRO_0000241226" description="Aspartyl/glutamyl-tRNA(Asn/Gln) amidotransferase subunit B">
    <location>
        <begin position="1"/>
        <end position="476"/>
    </location>
</feature>
<name>GATB_GEOKA</name>
<protein>
    <recommendedName>
        <fullName evidence="1">Aspartyl/glutamyl-tRNA(Asn/Gln) amidotransferase subunit B</fullName>
        <shortName evidence="1">Asp/Glu-ADT subunit B</shortName>
        <ecNumber evidence="1">6.3.5.-</ecNumber>
    </recommendedName>
</protein>
<gene>
    <name evidence="1" type="primary">gatB</name>
    <name type="ordered locus">GK0283</name>
</gene>
<dbReference type="EC" id="6.3.5.-" evidence="1"/>
<dbReference type="EMBL" id="BA000043">
    <property type="protein sequence ID" value="BAD74568.1"/>
    <property type="molecule type" value="Genomic_DNA"/>
</dbReference>
<dbReference type="RefSeq" id="WP_011229792.1">
    <property type="nucleotide sequence ID" value="NC_006510.1"/>
</dbReference>
<dbReference type="SMR" id="Q5L3B2"/>
<dbReference type="STRING" id="235909.GK0283"/>
<dbReference type="KEGG" id="gka:GK0283"/>
<dbReference type="eggNOG" id="COG0064">
    <property type="taxonomic scope" value="Bacteria"/>
</dbReference>
<dbReference type="HOGENOM" id="CLU_019240_0_0_9"/>
<dbReference type="Proteomes" id="UP000001172">
    <property type="component" value="Chromosome"/>
</dbReference>
<dbReference type="GO" id="GO:0050566">
    <property type="term" value="F:asparaginyl-tRNA synthase (glutamine-hydrolyzing) activity"/>
    <property type="evidence" value="ECO:0007669"/>
    <property type="project" value="RHEA"/>
</dbReference>
<dbReference type="GO" id="GO:0005524">
    <property type="term" value="F:ATP binding"/>
    <property type="evidence" value="ECO:0007669"/>
    <property type="project" value="UniProtKB-KW"/>
</dbReference>
<dbReference type="GO" id="GO:0050567">
    <property type="term" value="F:glutaminyl-tRNA synthase (glutamine-hydrolyzing) activity"/>
    <property type="evidence" value="ECO:0007669"/>
    <property type="project" value="UniProtKB-UniRule"/>
</dbReference>
<dbReference type="GO" id="GO:0070681">
    <property type="term" value="P:glutaminyl-tRNAGln biosynthesis via transamidation"/>
    <property type="evidence" value="ECO:0007669"/>
    <property type="project" value="TreeGrafter"/>
</dbReference>
<dbReference type="GO" id="GO:0006412">
    <property type="term" value="P:translation"/>
    <property type="evidence" value="ECO:0007669"/>
    <property type="project" value="UniProtKB-UniRule"/>
</dbReference>
<dbReference type="FunFam" id="1.10.10.410:FF:000001">
    <property type="entry name" value="Aspartyl/glutamyl-tRNA(Asn/Gln) amidotransferase subunit B"/>
    <property type="match status" value="1"/>
</dbReference>
<dbReference type="FunFam" id="1.10.150.380:FF:000001">
    <property type="entry name" value="Aspartyl/glutamyl-tRNA(Asn/Gln) amidotransferase subunit B"/>
    <property type="match status" value="1"/>
</dbReference>
<dbReference type="Gene3D" id="1.10.10.410">
    <property type="match status" value="1"/>
</dbReference>
<dbReference type="Gene3D" id="1.10.150.380">
    <property type="entry name" value="GatB domain, N-terminal subdomain"/>
    <property type="match status" value="1"/>
</dbReference>
<dbReference type="HAMAP" id="MF_00121">
    <property type="entry name" value="GatB"/>
    <property type="match status" value="1"/>
</dbReference>
<dbReference type="InterPro" id="IPR017959">
    <property type="entry name" value="Asn/Gln-tRNA_amidoTrfase_suB/E"/>
</dbReference>
<dbReference type="InterPro" id="IPR006075">
    <property type="entry name" value="Asn/Gln-tRNA_Trfase_suB/E_cat"/>
</dbReference>
<dbReference type="InterPro" id="IPR018027">
    <property type="entry name" value="Asn/Gln_amidotransferase"/>
</dbReference>
<dbReference type="InterPro" id="IPR003789">
    <property type="entry name" value="Asn/Gln_tRNA_amidoTrase-B-like"/>
</dbReference>
<dbReference type="InterPro" id="IPR004413">
    <property type="entry name" value="GatB"/>
</dbReference>
<dbReference type="InterPro" id="IPR042114">
    <property type="entry name" value="GatB_C_1"/>
</dbReference>
<dbReference type="InterPro" id="IPR023168">
    <property type="entry name" value="GatB_Yqey_C_2"/>
</dbReference>
<dbReference type="InterPro" id="IPR017958">
    <property type="entry name" value="Gln-tRNA_amidoTrfase_suB_CS"/>
</dbReference>
<dbReference type="InterPro" id="IPR014746">
    <property type="entry name" value="Gln_synth/guanido_kin_cat_dom"/>
</dbReference>
<dbReference type="NCBIfam" id="TIGR00133">
    <property type="entry name" value="gatB"/>
    <property type="match status" value="1"/>
</dbReference>
<dbReference type="NCBIfam" id="NF004011">
    <property type="entry name" value="PRK05477.1-1"/>
    <property type="match status" value="1"/>
</dbReference>
<dbReference type="NCBIfam" id="NF004012">
    <property type="entry name" value="PRK05477.1-2"/>
    <property type="match status" value="1"/>
</dbReference>
<dbReference type="NCBIfam" id="NF004014">
    <property type="entry name" value="PRK05477.1-4"/>
    <property type="match status" value="1"/>
</dbReference>
<dbReference type="PANTHER" id="PTHR11659">
    <property type="entry name" value="GLUTAMYL-TRNA GLN AMIDOTRANSFERASE SUBUNIT B MITOCHONDRIAL AND PROKARYOTIC PET112-RELATED"/>
    <property type="match status" value="1"/>
</dbReference>
<dbReference type="PANTHER" id="PTHR11659:SF0">
    <property type="entry name" value="GLUTAMYL-TRNA(GLN) AMIDOTRANSFERASE SUBUNIT B, MITOCHONDRIAL"/>
    <property type="match status" value="1"/>
</dbReference>
<dbReference type="Pfam" id="PF02934">
    <property type="entry name" value="GatB_N"/>
    <property type="match status" value="1"/>
</dbReference>
<dbReference type="Pfam" id="PF02637">
    <property type="entry name" value="GatB_Yqey"/>
    <property type="match status" value="1"/>
</dbReference>
<dbReference type="SMART" id="SM00845">
    <property type="entry name" value="GatB_Yqey"/>
    <property type="match status" value="1"/>
</dbReference>
<dbReference type="SUPFAM" id="SSF89095">
    <property type="entry name" value="GatB/YqeY motif"/>
    <property type="match status" value="1"/>
</dbReference>
<dbReference type="SUPFAM" id="SSF55931">
    <property type="entry name" value="Glutamine synthetase/guanido kinase"/>
    <property type="match status" value="1"/>
</dbReference>
<dbReference type="PROSITE" id="PS01234">
    <property type="entry name" value="GATB"/>
    <property type="match status" value="1"/>
</dbReference>
<evidence type="ECO:0000255" key="1">
    <source>
        <dbReference type="HAMAP-Rule" id="MF_00121"/>
    </source>
</evidence>
<organism>
    <name type="scientific">Geobacillus kaustophilus (strain HTA426)</name>
    <dbReference type="NCBI Taxonomy" id="235909"/>
    <lineage>
        <taxon>Bacteria</taxon>
        <taxon>Bacillati</taxon>
        <taxon>Bacillota</taxon>
        <taxon>Bacilli</taxon>
        <taxon>Bacillales</taxon>
        <taxon>Anoxybacillaceae</taxon>
        <taxon>Geobacillus</taxon>
        <taxon>Geobacillus thermoleovorans group</taxon>
    </lineage>
</organism>
<proteinExistence type="inferred from homology"/>
<comment type="function">
    <text evidence="1">Allows the formation of correctly charged Asn-tRNA(Asn) or Gln-tRNA(Gln) through the transamidation of misacylated Asp-tRNA(Asn) or Glu-tRNA(Gln) in organisms which lack either or both of asparaginyl-tRNA or glutaminyl-tRNA synthetases. The reaction takes place in the presence of glutamine and ATP through an activated phospho-Asp-tRNA(Asn) or phospho-Glu-tRNA(Gln).</text>
</comment>
<comment type="catalytic activity">
    <reaction evidence="1">
        <text>L-glutamyl-tRNA(Gln) + L-glutamine + ATP + H2O = L-glutaminyl-tRNA(Gln) + L-glutamate + ADP + phosphate + H(+)</text>
        <dbReference type="Rhea" id="RHEA:17521"/>
        <dbReference type="Rhea" id="RHEA-COMP:9681"/>
        <dbReference type="Rhea" id="RHEA-COMP:9684"/>
        <dbReference type="ChEBI" id="CHEBI:15377"/>
        <dbReference type="ChEBI" id="CHEBI:15378"/>
        <dbReference type="ChEBI" id="CHEBI:29985"/>
        <dbReference type="ChEBI" id="CHEBI:30616"/>
        <dbReference type="ChEBI" id="CHEBI:43474"/>
        <dbReference type="ChEBI" id="CHEBI:58359"/>
        <dbReference type="ChEBI" id="CHEBI:78520"/>
        <dbReference type="ChEBI" id="CHEBI:78521"/>
        <dbReference type="ChEBI" id="CHEBI:456216"/>
    </reaction>
</comment>
<comment type="catalytic activity">
    <reaction evidence="1">
        <text>L-aspartyl-tRNA(Asn) + L-glutamine + ATP + H2O = L-asparaginyl-tRNA(Asn) + L-glutamate + ADP + phosphate + 2 H(+)</text>
        <dbReference type="Rhea" id="RHEA:14513"/>
        <dbReference type="Rhea" id="RHEA-COMP:9674"/>
        <dbReference type="Rhea" id="RHEA-COMP:9677"/>
        <dbReference type="ChEBI" id="CHEBI:15377"/>
        <dbReference type="ChEBI" id="CHEBI:15378"/>
        <dbReference type="ChEBI" id="CHEBI:29985"/>
        <dbReference type="ChEBI" id="CHEBI:30616"/>
        <dbReference type="ChEBI" id="CHEBI:43474"/>
        <dbReference type="ChEBI" id="CHEBI:58359"/>
        <dbReference type="ChEBI" id="CHEBI:78515"/>
        <dbReference type="ChEBI" id="CHEBI:78516"/>
        <dbReference type="ChEBI" id="CHEBI:456216"/>
    </reaction>
</comment>
<comment type="subunit">
    <text evidence="1">Heterotrimer of A, B and C subunits.</text>
</comment>
<comment type="similarity">
    <text evidence="1">Belongs to the GatB/GatE family. GatB subfamily.</text>
</comment>
<sequence>MNFETVIGLEVHVELKTKSKIFSSSPNAFGAPPNTQTNVIDLGYPGVLPVLNRQAVEFAMKAAMALNCEIATETKFDRKNYFYPDNPKAYQISQYDQPLGRNGWIEIEVNGKKKKIGITRIHLEEDAGKLTHTGDGYSLVDFNRQGTPLIEIVSEPDIRSPEEAYAYLEKLKAIIQYTGVSDCKMEEGSLRCDANISLRPLGSDKFGTKTELKNLNSFNFVRMGLEYEAKRQEKILLSGGVIRQETRRFDEATKTTVLMRVKEGSEDYRYFPEPDLVMLYIDDEWKERVRASIPELPDARRKRYIEEWGLPEYDAKVLTLTKEMADFFEATVANGADPKLASNWLMVEVSGYLNAEQKELHDIALTPESLAGMIKLIQNGTISSKIAKKVFKELVEHGGDPEKIVKEKGLVQISDEGALRKIVLEVLDANPQSVEDYKNGKDRALGFLVGQVMKATKGQANPPLVNKLLVEEIGKR</sequence>
<keyword id="KW-0067">ATP-binding</keyword>
<keyword id="KW-0436">Ligase</keyword>
<keyword id="KW-0547">Nucleotide-binding</keyword>
<keyword id="KW-0648">Protein biosynthesis</keyword>
<keyword id="KW-1185">Reference proteome</keyword>
<accession>Q5L3B2</accession>
<reference key="1">
    <citation type="journal article" date="2004" name="Nucleic Acids Res.">
        <title>Thermoadaptation trait revealed by the genome sequence of thermophilic Geobacillus kaustophilus.</title>
        <authorList>
            <person name="Takami H."/>
            <person name="Takaki Y."/>
            <person name="Chee G.-J."/>
            <person name="Nishi S."/>
            <person name="Shimamura S."/>
            <person name="Suzuki H."/>
            <person name="Matsui S."/>
            <person name="Uchiyama I."/>
        </authorList>
    </citation>
    <scope>NUCLEOTIDE SEQUENCE [LARGE SCALE GENOMIC DNA]</scope>
    <source>
        <strain>HTA426</strain>
    </source>
</reference>